<name>NOX4_RAT</name>
<evidence type="ECO:0000250" key="1">
    <source>
        <dbReference type="UniProtKB" id="Q9JHI8"/>
    </source>
</evidence>
<evidence type="ECO:0000250" key="2">
    <source>
        <dbReference type="UniProtKB" id="Q9NPH5"/>
    </source>
</evidence>
<evidence type="ECO:0000255" key="3"/>
<evidence type="ECO:0000255" key="4">
    <source>
        <dbReference type="PROSITE-ProRule" id="PRU00716"/>
    </source>
</evidence>
<evidence type="ECO:0000269" key="5">
    <source>
    </source>
</evidence>
<evidence type="ECO:0000269" key="6">
    <source>
    </source>
</evidence>
<evidence type="ECO:0000269" key="7">
    <source>
    </source>
</evidence>
<evidence type="ECO:0000269" key="8">
    <source>
    </source>
</evidence>
<evidence type="ECO:0000269" key="9">
    <source>
    </source>
</evidence>
<evidence type="ECO:0000305" key="10"/>
<reference key="1">
    <citation type="journal article" date="2001" name="Circ. Res.">
        <title>Novel gp91(phox) homologues in vascular smooth muscle cells: nox1 mediates angiotensin II-induced superoxide formation and redox-sensitive signaling pathways.</title>
        <authorList>
            <person name="Lassegue B."/>
            <person name="Sorescu D."/>
            <person name="Szoecs K."/>
            <person name="Yin Q."/>
            <person name="Akers M."/>
            <person name="Zhang Y."/>
            <person name="Grant S.L."/>
            <person name="Lambeth J.D."/>
            <person name="Griendling K.K."/>
        </authorList>
    </citation>
    <scope>NUCLEOTIDE SEQUENCE [MRNA]</scope>
    <scope>TISSUE SPECIFICITY</scope>
    <source>
        <strain>Sprague-Dawley</strain>
        <tissue>Vascular smooth muscle</tissue>
    </source>
</reference>
<reference key="2">
    <citation type="journal article" date="2001" name="J. Biol. Chem.">
        <title>A novel superoxide-producing NAD(P)H oxidase in kidney.</title>
        <authorList>
            <person name="Shiose A."/>
            <person name="Kuroda J."/>
            <person name="Tsuruya K."/>
            <person name="Hirai M."/>
            <person name="Hirakata H."/>
            <person name="Naito S."/>
            <person name="Hattori M."/>
            <person name="Sakaki Y."/>
            <person name="Sumimoto H."/>
        </authorList>
    </citation>
    <scope>NUCLEOTIDE SEQUENCE [MRNA]</scope>
</reference>
<reference key="3">
    <citation type="journal article" date="2004" name="Arterioscler. Thromb. Vasc. Biol.">
        <title>Distinct subcellular localizations of Nox1 and Nox4 in vascular smooth muscle cells.</title>
        <authorList>
            <person name="Hilenski L.L."/>
            <person name="Clempus R.E."/>
            <person name="Quinn M.T."/>
            <person name="Lambeth J.D."/>
            <person name="Griendling K.K."/>
        </authorList>
    </citation>
    <scope>SUBCELLULAR LOCATION</scope>
</reference>
<reference key="4">
    <citation type="journal article" date="2004" name="J. Biol. Chem.">
        <title>Direct interaction of the novel Nox proteins with p22phox is required for the formation of a functionally active NADPH oxidase.</title>
        <authorList>
            <person name="Ambasta R.K."/>
            <person name="Kumar P."/>
            <person name="Griendling K.K."/>
            <person name="Schmidt H.H.H.W."/>
            <person name="Busse R."/>
            <person name="Brandes R.P."/>
        </authorList>
    </citation>
    <scope>FUNCTION</scope>
    <scope>INTERACTION WITH CYBA</scope>
    <scope>SUBCELLULAR LOCATION</scope>
    <scope>MUTAGENESIS OF HIS-119</scope>
    <scope>CATALYTIC ACTIVITY</scope>
</reference>
<reference key="5">
    <citation type="journal article" date="2005" name="J. Biol. Chem.">
        <title>Nox4 NAD(P)H oxidase mediates hypertrophy and fibronectin expression in the diabetic kidney.</title>
        <authorList>
            <person name="Gorin Y."/>
            <person name="Block K."/>
            <person name="Hernandez J."/>
            <person name="Bhandari B."/>
            <person name="Wagner B."/>
            <person name="Barnes J.L."/>
            <person name="Abboud H.E."/>
        </authorList>
    </citation>
    <scope>FUNCTION</scope>
    <scope>INDUCTION</scope>
    <scope>CATALYTIC ACTIVITY</scope>
</reference>
<reference key="6">
    <citation type="journal article" date="2005" name="J. Biol. Chem.">
        <title>Regulation of NAD(P)H oxidase by associated protein disulfide isomerase in vascular smooth muscle cells.</title>
        <authorList>
            <person name="Janiszewski M."/>
            <person name="Lopes L.R."/>
            <person name="Carmo A.O."/>
            <person name="Pedro M.A."/>
            <person name="Brandes R.P."/>
            <person name="Santos C.X.C."/>
            <person name="Laurindo F.R.M."/>
        </authorList>
    </citation>
    <scope>INTERACTION WITH PROTEIN DISULFIDE ISOMERASE</scope>
    <scope>SUBCELLULAR LOCATION</scope>
</reference>
<proteinExistence type="evidence at protein level"/>
<accession>Q924V1</accession>
<accession>Q99M78</accession>
<comment type="function">
    <text evidence="2 7 8">NADPH oxidase that catalyzes predominantly the reduction of oxygen to H2O2 (By similarity). Can also catalyze to a smaller extent, the reduction of oxygen to superoxide (PubMed:15322091, PubMed:16135519). May function as an oxygen sensor regulating the KCNK3/TASK-1 potassium channel and HIF1A activity (By similarity). May regulate insulin signaling cascade (By similarity). May play a role in apoptosis, bone resorption and lipolysaccharide-mediated activation of NFKB (By similarity). May produce superoxide in the nucleus and play a role in regulating gene expression upon cell stimulation (By similarity). Promotes ferroptosis, reactive oxygen species production and reduced glutathione (GSH) levels by activating NLRP3 inflammasome activation and cytokine release (By similarity).</text>
</comment>
<comment type="catalytic activity">
    <reaction evidence="7 8">
        <text>NADPH + 2 O2 = 2 superoxide + NADP(+) + H(+)</text>
        <dbReference type="Rhea" id="RHEA:63180"/>
        <dbReference type="ChEBI" id="CHEBI:15378"/>
        <dbReference type="ChEBI" id="CHEBI:15379"/>
        <dbReference type="ChEBI" id="CHEBI:18421"/>
        <dbReference type="ChEBI" id="CHEBI:57783"/>
        <dbReference type="ChEBI" id="CHEBI:58349"/>
    </reaction>
</comment>
<comment type="catalytic activity">
    <reaction evidence="2">
        <text>NADPH + O2 + H(+) = H2O2 + NADP(+)</text>
        <dbReference type="Rhea" id="RHEA:11260"/>
        <dbReference type="ChEBI" id="CHEBI:15378"/>
        <dbReference type="ChEBI" id="CHEBI:15379"/>
        <dbReference type="ChEBI" id="CHEBI:16240"/>
        <dbReference type="ChEBI" id="CHEBI:57783"/>
        <dbReference type="ChEBI" id="CHEBI:58349"/>
        <dbReference type="EC" id="1.6.3.1"/>
    </reaction>
</comment>
<comment type="cofactor">
    <cofactor evidence="2">
        <name>heme</name>
        <dbReference type="ChEBI" id="CHEBI:30413"/>
    </cofactor>
</comment>
<comment type="activity regulation">
    <text evidence="1 2">Activated by insulin. Inhibited by diphenylene iodonium. Inhibited by plumbagin. Activated by phorbol 12-myristate 13-acetate (PMA) (By similarity).</text>
</comment>
<comment type="subunit">
    <text evidence="2 7 9">Interacts with TLR4 (By similarity). Interacts with, relocalizes and stabilizes CYBA/p22phox. Interacts with protein disulfide isomerase. Interacts with PPP1R15A (By similarity). Interacts with LRRC8A; this interaction prevents the ubiquitin-mediated degradation of LRRC8A (By similarity).</text>
</comment>
<comment type="subcellular location">
    <subcellularLocation>
        <location evidence="2">Cytoplasm</location>
    </subcellularLocation>
    <subcellularLocation>
        <location evidence="7">Endoplasmic reticulum membrane</location>
        <topology evidence="3">Multi-pass membrane protein</topology>
    </subcellularLocation>
    <subcellularLocation>
        <location evidence="2">Cell membrane</location>
        <topology evidence="3">Multi-pass membrane protein</topology>
    </subcellularLocation>
    <subcellularLocation>
        <location evidence="6">Cell junction</location>
        <location evidence="6">Focal adhesion</location>
    </subcellularLocation>
    <subcellularLocation>
        <location evidence="2">Nucleus</location>
    </subcellularLocation>
</comment>
<comment type="tissue specificity">
    <text evidence="5">Expressed in vascular smooth muscle.</text>
</comment>
<comment type="induction">
    <text evidence="8">Up-regulated in diabetic kidney (at protein level).</text>
</comment>
<comment type="PTM">
    <text evidence="2">N-glycosylation is required for the function.</text>
</comment>
<organism>
    <name type="scientific">Rattus norvegicus</name>
    <name type="common">Rat</name>
    <dbReference type="NCBI Taxonomy" id="10116"/>
    <lineage>
        <taxon>Eukaryota</taxon>
        <taxon>Metazoa</taxon>
        <taxon>Chordata</taxon>
        <taxon>Craniata</taxon>
        <taxon>Vertebrata</taxon>
        <taxon>Euteleostomi</taxon>
        <taxon>Mammalia</taxon>
        <taxon>Eutheria</taxon>
        <taxon>Euarchontoglires</taxon>
        <taxon>Glires</taxon>
        <taxon>Rodentia</taxon>
        <taxon>Myomorpha</taxon>
        <taxon>Muroidea</taxon>
        <taxon>Muridae</taxon>
        <taxon>Murinae</taxon>
        <taxon>Rattus</taxon>
    </lineage>
</organism>
<sequence>MALSWRSWLANEGVKHLCLLVWLSLNVLLFWKTFLLYNQGPEYYYIHQMLGLGLCLSRASASVLNLNCSLILLPMCRTVLAYLRGSQKVPSRRTRRLLDKSKTLHITCGITICIFSGVHVAAHLVNALNFSVNYSEHFLALNAARYQNEDPRKLLFTTVPGLTGVCMVVVLFLMVTASTYAIRVSNYDIFWYTHNLFFVFYMLLLLHVSGGLLKYQTNLDTHPPGCISLNRTPSQNMSIADYVSEHFHGSLPGGFSKLEDHYQKTLVKICLEEPKFQAHFPQTWIWISGPLCLYCAERLYRCIRSNKPVTIISVINHPSDVMELRMIKENFKARPGQYIILHCPSVSALENHPFTLTMCPTETKATFGVHFKVVGDWTERFRDLLLPPSSQDSEILPFIQSRNYPKLYIDGPFGSPFEESLNYEVSLCVAGGIGVTPFASILNTLLDDWKPYKLRRLYFIWVCRDIQSFQWFADLLYVLHNKFWQENRPDFVNIQLYLSQTDGIQKIIGEKYHTLNSRLFIGRPRWKLLFDEIAKCNRGKTVGVFCCGPSSISKTLHNLSNRNNSYGTKFEYNKESFS</sequence>
<keyword id="KW-0965">Cell junction</keyword>
<keyword id="KW-1003">Cell membrane</keyword>
<keyword id="KW-0963">Cytoplasm</keyword>
<keyword id="KW-1015">Disulfide bond</keyword>
<keyword id="KW-0256">Endoplasmic reticulum</keyword>
<keyword id="KW-0325">Glycoprotein</keyword>
<keyword id="KW-0472">Membrane</keyword>
<keyword id="KW-0521">NADP</keyword>
<keyword id="KW-0539">Nucleus</keyword>
<keyword id="KW-0560">Oxidoreductase</keyword>
<keyword id="KW-1185">Reference proteome</keyword>
<keyword id="KW-0812">Transmembrane</keyword>
<keyword id="KW-1133">Transmembrane helix</keyword>
<gene>
    <name type="primary">Nox4</name>
    <name type="synonym">Kox</name>
</gene>
<feature type="chain" id="PRO_0000238983" description="NADPH oxidase 4">
    <location>
        <begin position="1"/>
        <end position="578"/>
    </location>
</feature>
<feature type="topological domain" description="Cytoplasmic" evidence="3">
    <location>
        <begin position="1"/>
        <end position="16"/>
    </location>
</feature>
<feature type="transmembrane region" description="Helical" evidence="3">
    <location>
        <begin position="17"/>
        <end position="37"/>
    </location>
</feature>
<feature type="topological domain" description="Extracellular" evidence="3">
    <location>
        <begin position="38"/>
        <end position="62"/>
    </location>
</feature>
<feature type="transmembrane region" description="Helical" evidence="3">
    <location>
        <begin position="63"/>
        <end position="83"/>
    </location>
</feature>
<feature type="topological domain" description="Cytoplasmic" evidence="3">
    <location>
        <begin position="84"/>
        <end position="104"/>
    </location>
</feature>
<feature type="transmembrane region" description="Helical" evidence="3">
    <location>
        <begin position="105"/>
        <end position="125"/>
    </location>
</feature>
<feature type="topological domain" description="Extracellular" evidence="3">
    <location>
        <begin position="126"/>
        <end position="154"/>
    </location>
</feature>
<feature type="transmembrane region" description="Helical" evidence="3">
    <location>
        <begin position="155"/>
        <end position="175"/>
    </location>
</feature>
<feature type="topological domain" description="Cytoplasmic" evidence="3">
    <location>
        <begin position="176"/>
        <end position="188"/>
    </location>
</feature>
<feature type="transmembrane region" description="Helical" evidence="3">
    <location>
        <begin position="189"/>
        <end position="209"/>
    </location>
</feature>
<feature type="topological domain" description="Extracellular" evidence="3">
    <location>
        <begin position="210"/>
        <end position="424"/>
    </location>
</feature>
<feature type="transmembrane region" description="Helical" evidence="3">
    <location>
        <begin position="425"/>
        <end position="445"/>
    </location>
</feature>
<feature type="topological domain" description="Cytoplasmic" evidence="3">
    <location>
        <begin position="446"/>
        <end position="578"/>
    </location>
</feature>
<feature type="domain" description="Ferric oxidoreductase">
    <location>
        <begin position="58"/>
        <end position="303"/>
    </location>
</feature>
<feature type="domain" description="FAD-binding FR-type" evidence="4">
    <location>
        <begin position="304"/>
        <end position="419"/>
    </location>
</feature>
<feature type="region of interest" description="E-loop; essential for H2O2 generating catalytic activity" evidence="2">
    <location>
        <begin position="218"/>
        <end position="273"/>
    </location>
</feature>
<feature type="region of interest" description="Mediates interaction with TLR4" evidence="2">
    <location>
        <begin position="248"/>
        <end position="575"/>
    </location>
</feature>
<feature type="glycosylation site" description="N-linked (GlcNAc...) asparagine" evidence="3">
    <location>
        <position position="133"/>
    </location>
</feature>
<feature type="mutagenesis site" description="Loss of interaction with CYBA/p22phox." evidence="7">
    <original>H</original>
    <variation>L</variation>
    <location>
        <position position="119"/>
    </location>
</feature>
<feature type="sequence conflict" description="In Ref. 2; BAB61724." evidence="10" ref="2">
    <original>T</original>
    <variation>P</variation>
    <location>
        <position position="232"/>
    </location>
</feature>
<protein>
    <recommendedName>
        <fullName>NADPH oxidase 4</fullName>
        <ecNumber evidence="2">1.6.3.1</ecNumber>
    </recommendedName>
    <alternativeName>
        <fullName>Kidney oxidase-1</fullName>
        <shortName>KOX-1</shortName>
    </alternativeName>
    <alternativeName>
        <fullName>Kidney superoxide-producing NADPH oxidase</fullName>
    </alternativeName>
</protein>
<dbReference type="EC" id="1.6.3.1" evidence="2"/>
<dbReference type="EMBL" id="AY027527">
    <property type="protein sequence ID" value="AAK14799.1"/>
    <property type="molecule type" value="mRNA"/>
</dbReference>
<dbReference type="EMBL" id="AB044086">
    <property type="protein sequence ID" value="BAB61724.1"/>
    <property type="molecule type" value="mRNA"/>
</dbReference>
<dbReference type="RefSeq" id="NP_445976.1">
    <property type="nucleotide sequence ID" value="NM_053524.1"/>
</dbReference>
<dbReference type="SMR" id="Q924V1"/>
<dbReference type="BioGRID" id="250101">
    <property type="interactions" value="3"/>
</dbReference>
<dbReference type="FunCoup" id="Q924V1">
    <property type="interactions" value="141"/>
</dbReference>
<dbReference type="STRING" id="10116.ENSRNOP00000018990"/>
<dbReference type="PeroxiBase" id="5409">
    <property type="entry name" value="RnoNOx04"/>
</dbReference>
<dbReference type="GlyCosmos" id="Q924V1">
    <property type="glycosylation" value="1 site, No reported glycans"/>
</dbReference>
<dbReference type="GlyGen" id="Q924V1">
    <property type="glycosylation" value="1 site"/>
</dbReference>
<dbReference type="PhosphoSitePlus" id="Q924V1"/>
<dbReference type="PaxDb" id="10116-ENSRNOP00000018990"/>
<dbReference type="Ensembl" id="ENSRNOT00000102096.1">
    <property type="protein sequence ID" value="ENSRNOP00000085650.1"/>
    <property type="gene ID" value="ENSRNOG00000013925.8"/>
</dbReference>
<dbReference type="GeneID" id="85431"/>
<dbReference type="KEGG" id="rno:85431"/>
<dbReference type="UCSC" id="RGD:620600">
    <property type="organism name" value="rat"/>
</dbReference>
<dbReference type="AGR" id="RGD:620600"/>
<dbReference type="CTD" id="50507"/>
<dbReference type="RGD" id="620600">
    <property type="gene designation" value="Nox4"/>
</dbReference>
<dbReference type="eggNOG" id="KOG0039">
    <property type="taxonomic scope" value="Eukaryota"/>
</dbReference>
<dbReference type="GeneTree" id="ENSGT00940000159621"/>
<dbReference type="HOGENOM" id="CLU_005646_3_1_1"/>
<dbReference type="InParanoid" id="Q924V1"/>
<dbReference type="BRENDA" id="1.6.3.1">
    <property type="organism ID" value="5301"/>
</dbReference>
<dbReference type="Reactome" id="R-RNO-3299685">
    <property type="pathway name" value="Detoxification of Reactive Oxygen Species"/>
</dbReference>
<dbReference type="PRO" id="PR:Q924V1"/>
<dbReference type="Proteomes" id="UP000002494">
    <property type="component" value="Chromosome 1"/>
</dbReference>
<dbReference type="Bgee" id="ENSRNOG00000013925">
    <property type="expression patterns" value="Expressed in adult mammalian kidney and 12 other cell types or tissues"/>
</dbReference>
<dbReference type="GO" id="GO:0016324">
    <property type="term" value="C:apical plasma membrane"/>
    <property type="evidence" value="ECO:0000314"/>
    <property type="project" value="RGD"/>
</dbReference>
<dbReference type="GO" id="GO:0071944">
    <property type="term" value="C:cell periphery"/>
    <property type="evidence" value="ECO:0000266"/>
    <property type="project" value="RGD"/>
</dbReference>
<dbReference type="GO" id="GO:0005783">
    <property type="term" value="C:endoplasmic reticulum"/>
    <property type="evidence" value="ECO:0000314"/>
    <property type="project" value="UniProtKB"/>
</dbReference>
<dbReference type="GO" id="GO:0005789">
    <property type="term" value="C:endoplasmic reticulum membrane"/>
    <property type="evidence" value="ECO:0000266"/>
    <property type="project" value="RGD"/>
</dbReference>
<dbReference type="GO" id="GO:0005925">
    <property type="term" value="C:focal adhesion"/>
    <property type="evidence" value="ECO:0000314"/>
    <property type="project" value="RGD"/>
</dbReference>
<dbReference type="GO" id="GO:0005739">
    <property type="term" value="C:mitochondrion"/>
    <property type="evidence" value="ECO:0000314"/>
    <property type="project" value="ARUK-UCL"/>
</dbReference>
<dbReference type="GO" id="GO:0043020">
    <property type="term" value="C:NADPH oxidase complex"/>
    <property type="evidence" value="ECO:0000314"/>
    <property type="project" value="RGD"/>
</dbReference>
<dbReference type="GO" id="GO:0005634">
    <property type="term" value="C:nucleus"/>
    <property type="evidence" value="ECO:0000314"/>
    <property type="project" value="ARUK-UCL"/>
</dbReference>
<dbReference type="GO" id="GO:0097038">
    <property type="term" value="C:perinuclear endoplasmic reticulum"/>
    <property type="evidence" value="ECO:0000314"/>
    <property type="project" value="ARUK-UCL"/>
</dbReference>
<dbReference type="GO" id="GO:0048471">
    <property type="term" value="C:perinuclear region of cytoplasm"/>
    <property type="evidence" value="ECO:0000314"/>
    <property type="project" value="ARUK-UCL"/>
</dbReference>
<dbReference type="GO" id="GO:0005886">
    <property type="term" value="C:plasma membrane"/>
    <property type="evidence" value="ECO:0000266"/>
    <property type="project" value="RGD"/>
</dbReference>
<dbReference type="GO" id="GO:0016529">
    <property type="term" value="C:sarcoplasmic reticulum"/>
    <property type="evidence" value="ECO:0000314"/>
    <property type="project" value="RGD"/>
</dbReference>
<dbReference type="GO" id="GO:0001725">
    <property type="term" value="C:stress fiber"/>
    <property type="evidence" value="ECO:0000314"/>
    <property type="project" value="RGD"/>
</dbReference>
<dbReference type="GO" id="GO:0020037">
    <property type="term" value="F:heme binding"/>
    <property type="evidence" value="ECO:0000250"/>
    <property type="project" value="UniProtKB"/>
</dbReference>
<dbReference type="GO" id="GO:0072341">
    <property type="term" value="F:modified amino acid binding"/>
    <property type="evidence" value="ECO:0000266"/>
    <property type="project" value="RGD"/>
</dbReference>
<dbReference type="GO" id="GO:0016174">
    <property type="term" value="F:NAD(P)H oxidase H2O2-forming activity"/>
    <property type="evidence" value="ECO:0000314"/>
    <property type="project" value="RGD"/>
</dbReference>
<dbReference type="GO" id="GO:0106294">
    <property type="term" value="F:NADPH oxidase H202-forming activity"/>
    <property type="evidence" value="ECO:0007669"/>
    <property type="project" value="RHEA"/>
</dbReference>
<dbReference type="GO" id="GO:0050664">
    <property type="term" value="F:oxidoreductase activity, acting on NAD(P)H, oxygen as acceptor"/>
    <property type="evidence" value="ECO:0000314"/>
    <property type="project" value="RGD"/>
</dbReference>
<dbReference type="GO" id="GO:1990782">
    <property type="term" value="F:protein tyrosine kinase binding"/>
    <property type="evidence" value="ECO:0000266"/>
    <property type="project" value="RGD"/>
</dbReference>
<dbReference type="GO" id="GO:0016175">
    <property type="term" value="F:superoxide-generating NAD(P)H oxidase activity"/>
    <property type="evidence" value="ECO:0000314"/>
    <property type="project" value="UniProtKB"/>
</dbReference>
<dbReference type="GO" id="GO:0106292">
    <property type="term" value="F:superoxide-generating NADPH oxidase activity"/>
    <property type="evidence" value="ECO:0007669"/>
    <property type="project" value="RHEA"/>
</dbReference>
<dbReference type="GO" id="GO:0045453">
    <property type="term" value="P:bone resorption"/>
    <property type="evidence" value="ECO:0000266"/>
    <property type="project" value="RGD"/>
</dbReference>
<dbReference type="GO" id="GO:0055007">
    <property type="term" value="P:cardiac muscle cell differentiation"/>
    <property type="evidence" value="ECO:0000266"/>
    <property type="project" value="RGD"/>
</dbReference>
<dbReference type="GO" id="GO:0000902">
    <property type="term" value="P:cell morphogenesis"/>
    <property type="evidence" value="ECO:0000250"/>
    <property type="project" value="UniProtKB"/>
</dbReference>
<dbReference type="GO" id="GO:0071320">
    <property type="term" value="P:cellular response to cAMP"/>
    <property type="evidence" value="ECO:0000270"/>
    <property type="project" value="RGD"/>
</dbReference>
<dbReference type="GO" id="GO:0071480">
    <property type="term" value="P:cellular response to gamma radiation"/>
    <property type="evidence" value="ECO:0000270"/>
    <property type="project" value="RGD"/>
</dbReference>
<dbReference type="GO" id="GO:0071333">
    <property type="term" value="P:cellular response to glucose stimulus"/>
    <property type="evidence" value="ECO:0000266"/>
    <property type="project" value="RGD"/>
</dbReference>
<dbReference type="GO" id="GO:0071347">
    <property type="term" value="P:cellular response to interleukin-1"/>
    <property type="evidence" value="ECO:0000270"/>
    <property type="project" value="RGD"/>
</dbReference>
<dbReference type="GO" id="GO:0071288">
    <property type="term" value="P:cellular response to mercury ion"/>
    <property type="evidence" value="ECO:0000270"/>
    <property type="project" value="RGD"/>
</dbReference>
<dbReference type="GO" id="GO:0071560">
    <property type="term" value="P:cellular response to transforming growth factor beta stimulus"/>
    <property type="evidence" value="ECO:0000270"/>
    <property type="project" value="RGD"/>
</dbReference>
<dbReference type="GO" id="GO:0006952">
    <property type="term" value="P:defense response"/>
    <property type="evidence" value="ECO:0000318"/>
    <property type="project" value="GO_Central"/>
</dbReference>
<dbReference type="GO" id="GO:0010467">
    <property type="term" value="P:gene expression"/>
    <property type="evidence" value="ECO:0000266"/>
    <property type="project" value="RGD"/>
</dbReference>
<dbReference type="GO" id="GO:0003015">
    <property type="term" value="P:heart process"/>
    <property type="evidence" value="ECO:0000266"/>
    <property type="project" value="RGD"/>
</dbReference>
<dbReference type="GO" id="GO:0050667">
    <property type="term" value="P:homocysteine metabolic process"/>
    <property type="evidence" value="ECO:0000266"/>
    <property type="project" value="RGD"/>
</dbReference>
<dbReference type="GO" id="GO:0008285">
    <property type="term" value="P:negative regulation of cell population proliferation"/>
    <property type="evidence" value="ECO:0000250"/>
    <property type="project" value="UniProtKB"/>
</dbReference>
<dbReference type="GO" id="GO:0043065">
    <property type="term" value="P:positive regulation of apoptotic process"/>
    <property type="evidence" value="ECO:0000315"/>
    <property type="project" value="RGD"/>
</dbReference>
<dbReference type="GO" id="GO:2000573">
    <property type="term" value="P:positive regulation of DNA biosynthetic process"/>
    <property type="evidence" value="ECO:0000266"/>
    <property type="project" value="RGD"/>
</dbReference>
<dbReference type="GO" id="GO:0070374">
    <property type="term" value="P:positive regulation of ERK1 and ERK2 cascade"/>
    <property type="evidence" value="ECO:0000266"/>
    <property type="project" value="RGD"/>
</dbReference>
<dbReference type="GO" id="GO:0010729">
    <property type="term" value="P:positive regulation of hydrogen peroxide biosynthetic process"/>
    <property type="evidence" value="ECO:0000315"/>
    <property type="project" value="RGD"/>
</dbReference>
<dbReference type="GO" id="GO:0051897">
    <property type="term" value="P:positive regulation of phosphatidylinositol 3-kinase/protein kinase B signal transduction"/>
    <property type="evidence" value="ECO:0000266"/>
    <property type="project" value="RGD"/>
</dbReference>
<dbReference type="GO" id="GO:2000379">
    <property type="term" value="P:positive regulation of reactive oxygen species metabolic process"/>
    <property type="evidence" value="ECO:0000315"/>
    <property type="project" value="RGD"/>
</dbReference>
<dbReference type="GO" id="GO:0014911">
    <property type="term" value="P:positive regulation of smooth muscle cell migration"/>
    <property type="evidence" value="ECO:0000315"/>
    <property type="project" value="RGD"/>
</dbReference>
<dbReference type="GO" id="GO:0051496">
    <property type="term" value="P:positive regulation of stress fiber assembly"/>
    <property type="evidence" value="ECO:0000315"/>
    <property type="project" value="RGD"/>
</dbReference>
<dbReference type="GO" id="GO:0072593">
    <property type="term" value="P:reactive oxygen species metabolic process"/>
    <property type="evidence" value="ECO:0000266"/>
    <property type="project" value="RGD"/>
</dbReference>
<dbReference type="GO" id="GO:0001666">
    <property type="term" value="P:response to hypoxia"/>
    <property type="evidence" value="ECO:0000270"/>
    <property type="project" value="RGD"/>
</dbReference>
<dbReference type="GO" id="GO:0042554">
    <property type="term" value="P:superoxide anion generation"/>
    <property type="evidence" value="ECO:0000250"/>
    <property type="project" value="UniProtKB"/>
</dbReference>
<dbReference type="GO" id="GO:0006801">
    <property type="term" value="P:superoxide metabolic process"/>
    <property type="evidence" value="ECO:0000314"/>
    <property type="project" value="RGD"/>
</dbReference>
<dbReference type="CDD" id="cd06186">
    <property type="entry name" value="NOX_Duox_like_FAD_NADP"/>
    <property type="match status" value="1"/>
</dbReference>
<dbReference type="FunFam" id="2.40.30.10:FF:000183">
    <property type="entry name" value="NADPH oxidase 4"/>
    <property type="match status" value="1"/>
</dbReference>
<dbReference type="FunFam" id="3.40.50.80:FF:000015">
    <property type="entry name" value="NADPH oxidase 4"/>
    <property type="match status" value="1"/>
</dbReference>
<dbReference type="Gene3D" id="3.40.50.80">
    <property type="entry name" value="Nucleotide-binding domain of ferredoxin-NADP reductase (FNR) module"/>
    <property type="match status" value="1"/>
</dbReference>
<dbReference type="Gene3D" id="2.40.30.10">
    <property type="entry name" value="Translation factors"/>
    <property type="match status" value="1"/>
</dbReference>
<dbReference type="InterPro" id="IPR000778">
    <property type="entry name" value="Cyt_b245_heavy_chain"/>
</dbReference>
<dbReference type="InterPro" id="IPR013112">
    <property type="entry name" value="FAD-bd_8"/>
</dbReference>
<dbReference type="InterPro" id="IPR017927">
    <property type="entry name" value="FAD-bd_FR_type"/>
</dbReference>
<dbReference type="InterPro" id="IPR013130">
    <property type="entry name" value="Fe3_Rdtase_TM_dom"/>
</dbReference>
<dbReference type="InterPro" id="IPR013121">
    <property type="entry name" value="Fe_red_NAD-bd_6"/>
</dbReference>
<dbReference type="InterPro" id="IPR039261">
    <property type="entry name" value="FNR_nucleotide-bd"/>
</dbReference>
<dbReference type="InterPro" id="IPR050369">
    <property type="entry name" value="RBOH/FRE"/>
</dbReference>
<dbReference type="InterPro" id="IPR017938">
    <property type="entry name" value="Riboflavin_synthase-like_b-brl"/>
</dbReference>
<dbReference type="PANTHER" id="PTHR11972">
    <property type="entry name" value="NADPH OXIDASE"/>
    <property type="match status" value="1"/>
</dbReference>
<dbReference type="PANTHER" id="PTHR11972:SF206">
    <property type="entry name" value="NADPH OXIDASE 4"/>
    <property type="match status" value="1"/>
</dbReference>
<dbReference type="Pfam" id="PF08022">
    <property type="entry name" value="FAD_binding_8"/>
    <property type="match status" value="1"/>
</dbReference>
<dbReference type="Pfam" id="PF01794">
    <property type="entry name" value="Ferric_reduct"/>
    <property type="match status" value="1"/>
</dbReference>
<dbReference type="Pfam" id="PF08030">
    <property type="entry name" value="NAD_binding_6"/>
    <property type="match status" value="1"/>
</dbReference>
<dbReference type="PRINTS" id="PR00466">
    <property type="entry name" value="GP91PHOX"/>
</dbReference>
<dbReference type="SUPFAM" id="SSF52343">
    <property type="entry name" value="Ferredoxin reductase-like, C-terminal NADP-linked domain"/>
    <property type="match status" value="1"/>
</dbReference>
<dbReference type="SUPFAM" id="SSF63380">
    <property type="entry name" value="Riboflavin synthase domain-like"/>
    <property type="match status" value="1"/>
</dbReference>
<dbReference type="PROSITE" id="PS51384">
    <property type="entry name" value="FAD_FR"/>
    <property type="match status" value="1"/>
</dbReference>